<name>TFE_PYRAB</name>
<proteinExistence type="inferred from homology"/>
<accession>Q9UYS6</accession>
<accession>G8ZHP0</accession>
<reference key="1">
    <citation type="journal article" date="2003" name="Mol. Microbiol.">
        <title>An integrated analysis of the genome of the hyperthermophilic archaeon Pyrococcus abyssi.</title>
        <authorList>
            <person name="Cohen G.N."/>
            <person name="Barbe V."/>
            <person name="Flament D."/>
            <person name="Galperin M."/>
            <person name="Heilig R."/>
            <person name="Lecompte O."/>
            <person name="Poch O."/>
            <person name="Prieur D."/>
            <person name="Querellou J."/>
            <person name="Ripp R."/>
            <person name="Thierry J.-C."/>
            <person name="Van der Oost J."/>
            <person name="Weissenbach J."/>
            <person name="Zivanovic Y."/>
            <person name="Forterre P."/>
        </authorList>
    </citation>
    <scope>NUCLEOTIDE SEQUENCE [LARGE SCALE GENOMIC DNA]</scope>
    <source>
        <strain>GE5 / Orsay</strain>
    </source>
</reference>
<reference key="2">
    <citation type="journal article" date="2012" name="Curr. Microbiol.">
        <title>Re-annotation of two hyperthermophilic archaea Pyrococcus abyssi GE5 and Pyrococcus furiosus DSM 3638.</title>
        <authorList>
            <person name="Gao J."/>
            <person name="Wang J."/>
        </authorList>
    </citation>
    <scope>GENOME REANNOTATION</scope>
    <source>
        <strain>GE5 / Orsay</strain>
    </source>
</reference>
<feature type="chain" id="PRO_0000326619" description="Transcription factor E">
    <location>
        <begin position="1"/>
        <end position="190"/>
    </location>
</feature>
<feature type="domain" description="HTH TFE/IIEalpha-type" evidence="1">
    <location>
        <begin position="4"/>
        <end position="87"/>
    </location>
</feature>
<feature type="region of interest" description="Disordered" evidence="2">
    <location>
        <begin position="170"/>
        <end position="190"/>
    </location>
</feature>
<feature type="compositionally biased region" description="Basic residues" evidence="2">
    <location>
        <begin position="174"/>
        <end position="190"/>
    </location>
</feature>
<dbReference type="EMBL" id="AJ248287">
    <property type="protein sequence ID" value="CAB50336.1"/>
    <property type="molecule type" value="Genomic_DNA"/>
</dbReference>
<dbReference type="EMBL" id="HE613800">
    <property type="protein sequence ID" value="CCE70877.1"/>
    <property type="molecule type" value="Genomic_DNA"/>
</dbReference>
<dbReference type="PIR" id="C75055">
    <property type="entry name" value="C75055"/>
</dbReference>
<dbReference type="RefSeq" id="WP_010868546.1">
    <property type="nucleotide sequence ID" value="NC_000868.1"/>
</dbReference>
<dbReference type="SMR" id="Q9UYS6"/>
<dbReference type="STRING" id="272844.PAB0950"/>
<dbReference type="KEGG" id="pab:PAB0950"/>
<dbReference type="PATRIC" id="fig|272844.11.peg.1522"/>
<dbReference type="eggNOG" id="arCOG04270">
    <property type="taxonomic scope" value="Archaea"/>
</dbReference>
<dbReference type="HOGENOM" id="CLU_100097_0_0_2"/>
<dbReference type="OrthoDB" id="5935at2157"/>
<dbReference type="PhylomeDB" id="Q9UYS6"/>
<dbReference type="Proteomes" id="UP000000810">
    <property type="component" value="Chromosome"/>
</dbReference>
<dbReference type="Proteomes" id="UP000009139">
    <property type="component" value="Chromosome"/>
</dbReference>
<dbReference type="GO" id="GO:0003677">
    <property type="term" value="F:DNA binding"/>
    <property type="evidence" value="ECO:0007669"/>
    <property type="project" value="UniProtKB-KW"/>
</dbReference>
<dbReference type="GO" id="GO:0006355">
    <property type="term" value="P:regulation of DNA-templated transcription"/>
    <property type="evidence" value="ECO:0007669"/>
    <property type="project" value="InterPro"/>
</dbReference>
<dbReference type="GO" id="GO:0006367">
    <property type="term" value="P:transcription initiation at RNA polymerase II promoter"/>
    <property type="evidence" value="ECO:0007669"/>
    <property type="project" value="InterPro"/>
</dbReference>
<dbReference type="Gene3D" id="1.10.10.10">
    <property type="entry name" value="Winged helix-like DNA-binding domain superfamily/Winged helix DNA-binding domain"/>
    <property type="match status" value="1"/>
</dbReference>
<dbReference type="HAMAP" id="MF_01909">
    <property type="entry name" value="TFE_arch"/>
    <property type="match status" value="1"/>
</dbReference>
<dbReference type="InterPro" id="IPR016481">
    <property type="entry name" value="TF_E_archaea"/>
</dbReference>
<dbReference type="InterPro" id="IPR039997">
    <property type="entry name" value="TFE"/>
</dbReference>
<dbReference type="InterPro" id="IPR017919">
    <property type="entry name" value="TFIIE/TFIIEa_HTH"/>
</dbReference>
<dbReference type="InterPro" id="IPR002853">
    <property type="entry name" value="TFIIE_asu"/>
</dbReference>
<dbReference type="InterPro" id="IPR024550">
    <property type="entry name" value="TFIIEa/SarR/Rpc3_HTH_dom"/>
</dbReference>
<dbReference type="InterPro" id="IPR036388">
    <property type="entry name" value="WH-like_DNA-bd_sf"/>
</dbReference>
<dbReference type="InterPro" id="IPR036390">
    <property type="entry name" value="WH_DNA-bd_sf"/>
</dbReference>
<dbReference type="NCBIfam" id="NF004910">
    <property type="entry name" value="PRK06266.1"/>
    <property type="match status" value="1"/>
</dbReference>
<dbReference type="NCBIfam" id="TIGR00373">
    <property type="entry name" value="transcription factor E"/>
    <property type="match status" value="1"/>
</dbReference>
<dbReference type="PANTHER" id="PTHR13097:SF7">
    <property type="entry name" value="GENERAL TRANSCRIPTION FACTOR IIE SUBUNIT 1"/>
    <property type="match status" value="1"/>
</dbReference>
<dbReference type="PANTHER" id="PTHR13097">
    <property type="entry name" value="TRANSCRIPTION INITIATION FACTOR IIE, ALPHA SUBUNIT"/>
    <property type="match status" value="1"/>
</dbReference>
<dbReference type="Pfam" id="PF02002">
    <property type="entry name" value="TFIIE_alpha"/>
    <property type="match status" value="1"/>
</dbReference>
<dbReference type="PIRSF" id="PIRSF006373">
    <property type="entry name" value="TF_E_archaea"/>
    <property type="match status" value="1"/>
</dbReference>
<dbReference type="SMART" id="SM00531">
    <property type="entry name" value="TFIIE"/>
    <property type="match status" value="1"/>
</dbReference>
<dbReference type="SUPFAM" id="SSF46785">
    <property type="entry name" value="Winged helix' DNA-binding domain"/>
    <property type="match status" value="1"/>
</dbReference>
<dbReference type="PROSITE" id="PS51344">
    <property type="entry name" value="HTH_TFE_IIE"/>
    <property type="match status" value="1"/>
</dbReference>
<gene>
    <name evidence="1" type="primary">tfe</name>
    <name type="ordered locus">PYRAB14310</name>
    <name type="ORF">PAB0950</name>
</gene>
<evidence type="ECO:0000255" key="1">
    <source>
        <dbReference type="HAMAP-Rule" id="MF_01909"/>
    </source>
</evidence>
<evidence type="ECO:0000256" key="2">
    <source>
        <dbReference type="SAM" id="MobiDB-lite"/>
    </source>
</evidence>
<comment type="function">
    <text evidence="1">Transcription factor that plays a role in the activation of archaeal genes transcribed by RNA polymerase. Facilitates transcription initiation by enhancing TATA-box recognition by TATA-box-binding protein (Tbp), and transcription factor B (Tfb) and RNA polymerase recruitment. Not absolutely required for transcription in vitro, but particularly important in cases where Tbp or Tfb function is not optimal. It dynamically alters the nucleic acid-binding properties of RNA polymerases by stabilizing the initiation complex and destabilizing elongation complexes. Seems to translocate with the RNA polymerase following initiation and acts by binding to the non template strand of the transcription bubble in elongation complexes.</text>
</comment>
<comment type="subunit">
    <text evidence="1">Monomer. Interaction with RNA polymerase subunits RpoF and RpoE is necessary for Tfe stimulatory transcription activity. Able to interact with Tbp and RNA polymerase in the absence of DNA promoter. Interacts both with the preinitiation and elongation complexes.</text>
</comment>
<comment type="domain">
    <text evidence="1">The winged helix domain is involved in binding to DNA in the preinitiation complex.</text>
</comment>
<comment type="similarity">
    <text evidence="1">Belongs to the TFE family.</text>
</comment>
<keyword id="KW-0238">DNA-binding</keyword>
<keyword id="KW-0804">Transcription</keyword>
<keyword id="KW-0805">Transcription regulation</keyword>
<organism>
    <name type="scientific">Pyrococcus abyssi (strain GE5 / Orsay)</name>
    <dbReference type="NCBI Taxonomy" id="272844"/>
    <lineage>
        <taxon>Archaea</taxon>
        <taxon>Methanobacteriati</taxon>
        <taxon>Methanobacteriota</taxon>
        <taxon>Thermococci</taxon>
        <taxon>Thermococcales</taxon>
        <taxon>Thermococcaceae</taxon>
        <taxon>Pyrococcus</taxon>
    </lineage>
</organism>
<sequence length="190" mass="22457">MSRKNKALLEIAKDIGGDEAVEIVKALEKKGEATDEELAEITGIRVNTVRKILYALYDEKLADFKRIKDEETGWYYYYWHLETKRLPEIIRARKLRELERLKKMLQEETSEVYYHCGNPEHPKLTFDEAFEYGFTCPICGEILQEYDNSAVIEELKKRIEELEIELGLRPSPKKEKKKTRAKAKRKTRKK</sequence>
<protein>
    <recommendedName>
        <fullName evidence="1">Transcription factor E</fullName>
        <shortName evidence="1">TFE</shortName>
    </recommendedName>
    <alternativeName>
        <fullName evidence="1">TFIIE subunit alpha homolog</fullName>
    </alternativeName>
    <alternativeName>
        <fullName evidence="1">Transcription initiation factor TFIIE</fullName>
    </alternativeName>
</protein>